<gene>
    <name evidence="1" type="primary">mnmA</name>
    <name type="synonym">trmU</name>
    <name type="ordered locus">BR1591</name>
    <name type="ordered locus">BS1330_I1585</name>
</gene>
<proteinExistence type="inferred from homology"/>
<feature type="chain" id="PRO_0000121614" description="tRNA-specific 2-thiouridylase MnmA">
    <location>
        <begin position="1"/>
        <end position="398"/>
    </location>
</feature>
<feature type="region of interest" description="Interaction with tRNA" evidence="1">
    <location>
        <begin position="160"/>
        <end position="162"/>
    </location>
</feature>
<feature type="active site" description="Nucleophile" evidence="1">
    <location>
        <position position="114"/>
    </location>
</feature>
<feature type="active site" description="Cysteine persulfide intermediate" evidence="1">
    <location>
        <position position="210"/>
    </location>
</feature>
<feature type="binding site" evidence="1">
    <location>
        <begin position="20"/>
        <end position="27"/>
    </location>
    <ligand>
        <name>ATP</name>
        <dbReference type="ChEBI" id="CHEBI:30616"/>
    </ligand>
</feature>
<feature type="binding site" evidence="1">
    <location>
        <position position="46"/>
    </location>
    <ligand>
        <name>ATP</name>
        <dbReference type="ChEBI" id="CHEBI:30616"/>
    </ligand>
</feature>
<feature type="binding site" evidence="1">
    <location>
        <position position="138"/>
    </location>
    <ligand>
        <name>ATP</name>
        <dbReference type="ChEBI" id="CHEBI:30616"/>
    </ligand>
</feature>
<feature type="site" description="Interaction with tRNA" evidence="1">
    <location>
        <position position="139"/>
    </location>
</feature>
<feature type="site" description="Interaction with tRNA" evidence="1">
    <location>
        <position position="352"/>
    </location>
</feature>
<feature type="disulfide bond" description="Alternate" evidence="1">
    <location>
        <begin position="114"/>
        <end position="210"/>
    </location>
</feature>
<comment type="function">
    <text evidence="1">Catalyzes the 2-thiolation of uridine at the wobble position (U34) of tRNA, leading to the formation of s(2)U34.</text>
</comment>
<comment type="catalytic activity">
    <reaction evidence="1">
        <text>S-sulfanyl-L-cysteinyl-[protein] + uridine(34) in tRNA + AH2 + ATP = 2-thiouridine(34) in tRNA + L-cysteinyl-[protein] + A + AMP + diphosphate + H(+)</text>
        <dbReference type="Rhea" id="RHEA:47032"/>
        <dbReference type="Rhea" id="RHEA-COMP:10131"/>
        <dbReference type="Rhea" id="RHEA-COMP:11726"/>
        <dbReference type="Rhea" id="RHEA-COMP:11727"/>
        <dbReference type="Rhea" id="RHEA-COMP:11728"/>
        <dbReference type="ChEBI" id="CHEBI:13193"/>
        <dbReference type="ChEBI" id="CHEBI:15378"/>
        <dbReference type="ChEBI" id="CHEBI:17499"/>
        <dbReference type="ChEBI" id="CHEBI:29950"/>
        <dbReference type="ChEBI" id="CHEBI:30616"/>
        <dbReference type="ChEBI" id="CHEBI:33019"/>
        <dbReference type="ChEBI" id="CHEBI:61963"/>
        <dbReference type="ChEBI" id="CHEBI:65315"/>
        <dbReference type="ChEBI" id="CHEBI:87170"/>
        <dbReference type="ChEBI" id="CHEBI:456215"/>
        <dbReference type="EC" id="2.8.1.13"/>
    </reaction>
</comment>
<comment type="subcellular location">
    <subcellularLocation>
        <location evidence="1">Cytoplasm</location>
    </subcellularLocation>
</comment>
<comment type="similarity">
    <text evidence="1">Belongs to the MnmA/TRMU family.</text>
</comment>
<keyword id="KW-0067">ATP-binding</keyword>
<keyword id="KW-0963">Cytoplasm</keyword>
<keyword id="KW-1015">Disulfide bond</keyword>
<keyword id="KW-0547">Nucleotide-binding</keyword>
<keyword id="KW-0694">RNA-binding</keyword>
<keyword id="KW-0808">Transferase</keyword>
<keyword id="KW-0819">tRNA processing</keyword>
<keyword id="KW-0820">tRNA-binding</keyword>
<accession>Q8CY38</accession>
<accession>G0K6C8</accession>
<name>MNMA_BRUSU</name>
<reference key="1">
    <citation type="journal article" date="2002" name="Proc. Natl. Acad. Sci. U.S.A.">
        <title>The Brucella suis genome reveals fundamental similarities between animal and plant pathogens and symbionts.</title>
        <authorList>
            <person name="Paulsen I.T."/>
            <person name="Seshadri R."/>
            <person name="Nelson K.E."/>
            <person name="Eisen J.A."/>
            <person name="Heidelberg J.F."/>
            <person name="Read T.D."/>
            <person name="Dodson R.J."/>
            <person name="Umayam L.A."/>
            <person name="Brinkac L.M."/>
            <person name="Beanan M.J."/>
            <person name="Daugherty S.C."/>
            <person name="DeBoy R.T."/>
            <person name="Durkin A.S."/>
            <person name="Kolonay J.F."/>
            <person name="Madupu R."/>
            <person name="Nelson W.C."/>
            <person name="Ayodeji B."/>
            <person name="Kraul M."/>
            <person name="Shetty J."/>
            <person name="Malek J.A."/>
            <person name="Van Aken S.E."/>
            <person name="Riedmuller S."/>
            <person name="Tettelin H."/>
            <person name="Gill S.R."/>
            <person name="White O."/>
            <person name="Salzberg S.L."/>
            <person name="Hoover D.L."/>
            <person name="Lindler L.E."/>
            <person name="Halling S.M."/>
            <person name="Boyle S.M."/>
            <person name="Fraser C.M."/>
        </authorList>
    </citation>
    <scope>NUCLEOTIDE SEQUENCE [LARGE SCALE GENOMIC DNA]</scope>
    <source>
        <strain>1330</strain>
    </source>
</reference>
<reference key="2">
    <citation type="journal article" date="2011" name="J. Bacteriol.">
        <title>Revised genome sequence of Brucella suis 1330.</title>
        <authorList>
            <person name="Tae H."/>
            <person name="Shallom S."/>
            <person name="Settlage R."/>
            <person name="Preston D."/>
            <person name="Adams L.G."/>
            <person name="Garner H.R."/>
        </authorList>
    </citation>
    <scope>NUCLEOTIDE SEQUENCE [LARGE SCALE GENOMIC DNA]</scope>
    <source>
        <strain>1330</strain>
    </source>
</reference>
<evidence type="ECO:0000255" key="1">
    <source>
        <dbReference type="HAMAP-Rule" id="MF_00144"/>
    </source>
</evidence>
<organism>
    <name type="scientific">Brucella suis biovar 1 (strain 1330)</name>
    <dbReference type="NCBI Taxonomy" id="204722"/>
    <lineage>
        <taxon>Bacteria</taxon>
        <taxon>Pseudomonadati</taxon>
        <taxon>Pseudomonadota</taxon>
        <taxon>Alphaproteobacteria</taxon>
        <taxon>Hyphomicrobiales</taxon>
        <taxon>Brucellaceae</taxon>
        <taxon>Brucella/Ochrobactrum group</taxon>
        <taxon>Brucella</taxon>
    </lineage>
</organism>
<dbReference type="EC" id="2.8.1.13" evidence="1"/>
<dbReference type="EMBL" id="AE014291">
    <property type="protein sequence ID" value="AAN30496.1"/>
    <property type="molecule type" value="Genomic_DNA"/>
</dbReference>
<dbReference type="EMBL" id="CP002997">
    <property type="protein sequence ID" value="AEM18912.1"/>
    <property type="molecule type" value="Genomic_DNA"/>
</dbReference>
<dbReference type="SMR" id="Q8CY38"/>
<dbReference type="KEGG" id="bms:BR1591"/>
<dbReference type="KEGG" id="bsi:BS1330_I1585"/>
<dbReference type="PATRIC" id="fig|204722.21.peg.3233"/>
<dbReference type="HOGENOM" id="CLU_035188_0_1_5"/>
<dbReference type="PhylomeDB" id="Q8CY38"/>
<dbReference type="Proteomes" id="UP000007104">
    <property type="component" value="Chromosome I"/>
</dbReference>
<dbReference type="GO" id="GO:0005737">
    <property type="term" value="C:cytoplasm"/>
    <property type="evidence" value="ECO:0007669"/>
    <property type="project" value="UniProtKB-SubCell"/>
</dbReference>
<dbReference type="GO" id="GO:0005524">
    <property type="term" value="F:ATP binding"/>
    <property type="evidence" value="ECO:0007669"/>
    <property type="project" value="UniProtKB-KW"/>
</dbReference>
<dbReference type="GO" id="GO:0000049">
    <property type="term" value="F:tRNA binding"/>
    <property type="evidence" value="ECO:0007669"/>
    <property type="project" value="UniProtKB-KW"/>
</dbReference>
<dbReference type="GO" id="GO:0103016">
    <property type="term" value="F:tRNA-uridine 2-sulfurtransferase activity"/>
    <property type="evidence" value="ECO:0007669"/>
    <property type="project" value="UniProtKB-EC"/>
</dbReference>
<dbReference type="GO" id="GO:0002143">
    <property type="term" value="P:tRNA wobble position uridine thiolation"/>
    <property type="evidence" value="ECO:0007669"/>
    <property type="project" value="TreeGrafter"/>
</dbReference>
<dbReference type="CDD" id="cd01998">
    <property type="entry name" value="MnmA_TRMU-like"/>
    <property type="match status" value="1"/>
</dbReference>
<dbReference type="FunFam" id="2.30.30.280:FF:000001">
    <property type="entry name" value="tRNA-specific 2-thiouridylase MnmA"/>
    <property type="match status" value="1"/>
</dbReference>
<dbReference type="FunFam" id="3.40.50.620:FF:000115">
    <property type="entry name" value="tRNA-specific 2-thiouridylase MnmA"/>
    <property type="match status" value="1"/>
</dbReference>
<dbReference type="Gene3D" id="2.30.30.280">
    <property type="entry name" value="Adenine nucleotide alpha hydrolases-like domains"/>
    <property type="match status" value="1"/>
</dbReference>
<dbReference type="Gene3D" id="3.40.50.620">
    <property type="entry name" value="HUPs"/>
    <property type="match status" value="1"/>
</dbReference>
<dbReference type="Gene3D" id="2.40.30.10">
    <property type="entry name" value="Translation factors"/>
    <property type="match status" value="1"/>
</dbReference>
<dbReference type="HAMAP" id="MF_00144">
    <property type="entry name" value="tRNA_thiouridyl_MnmA"/>
    <property type="match status" value="1"/>
</dbReference>
<dbReference type="InterPro" id="IPR004506">
    <property type="entry name" value="MnmA-like"/>
</dbReference>
<dbReference type="InterPro" id="IPR046885">
    <property type="entry name" value="MnmA-like_C"/>
</dbReference>
<dbReference type="InterPro" id="IPR046884">
    <property type="entry name" value="MnmA-like_central"/>
</dbReference>
<dbReference type="InterPro" id="IPR023382">
    <property type="entry name" value="MnmA-like_central_sf"/>
</dbReference>
<dbReference type="InterPro" id="IPR014729">
    <property type="entry name" value="Rossmann-like_a/b/a_fold"/>
</dbReference>
<dbReference type="NCBIfam" id="NF001138">
    <property type="entry name" value="PRK00143.1"/>
    <property type="match status" value="1"/>
</dbReference>
<dbReference type="NCBIfam" id="TIGR00420">
    <property type="entry name" value="trmU"/>
    <property type="match status" value="1"/>
</dbReference>
<dbReference type="PANTHER" id="PTHR11933:SF5">
    <property type="entry name" value="MITOCHONDRIAL TRNA-SPECIFIC 2-THIOURIDYLASE 1"/>
    <property type="match status" value="1"/>
</dbReference>
<dbReference type="PANTHER" id="PTHR11933">
    <property type="entry name" value="TRNA 5-METHYLAMINOMETHYL-2-THIOURIDYLATE -METHYLTRANSFERASE"/>
    <property type="match status" value="1"/>
</dbReference>
<dbReference type="Pfam" id="PF03054">
    <property type="entry name" value="tRNA_Me_trans"/>
    <property type="match status" value="1"/>
</dbReference>
<dbReference type="Pfam" id="PF20258">
    <property type="entry name" value="tRNA_Me_trans_C"/>
    <property type="match status" value="1"/>
</dbReference>
<dbReference type="Pfam" id="PF20259">
    <property type="entry name" value="tRNA_Me_trans_M"/>
    <property type="match status" value="1"/>
</dbReference>
<dbReference type="SUPFAM" id="SSF52402">
    <property type="entry name" value="Adenine nucleotide alpha hydrolases-like"/>
    <property type="match status" value="1"/>
</dbReference>
<protein>
    <recommendedName>
        <fullName evidence="1">tRNA-specific 2-thiouridylase MnmA</fullName>
        <ecNumber evidence="1">2.8.1.13</ecNumber>
    </recommendedName>
</protein>
<sequence length="398" mass="43229">MSLNSLDLPGKPEDTRVVVAMSGGVDSSVVAGILKREGYDVVGVTLQLYDHGAAVHRAGSCCAGQDIEDARRVSESLGIPHYVLDYEARFREAVIDPFANSYVSGETPIPCVSCNQTVKFADLLQTARDLGADALATGHYIRSRANGAHRALYRPVDTDRDQSYFLFATTQEQIDYLRFPLGHLPKAQVREIAEELGLTVAKKQDSQDICFVPQGKYSDIISRLKPEAANPGDIVHIDGRTLGRHDGIVHYTVGQRRGIGVATGEALYVVHLDAANARVIVGPREALETHKVFLRDVNWLGDTPIADLPKSGMEVFAKVRSTRPPRPAVLRHADGQTWVELVDGESGIAPGQACVLYSDDSNAARVFGGGFIGRSEREPQAEEMLRRLMANADKASAA</sequence>